<organism>
    <name type="scientific">Legionella pneumophila (strain Corby)</name>
    <dbReference type="NCBI Taxonomy" id="400673"/>
    <lineage>
        <taxon>Bacteria</taxon>
        <taxon>Pseudomonadati</taxon>
        <taxon>Pseudomonadota</taxon>
        <taxon>Gammaproteobacteria</taxon>
        <taxon>Legionellales</taxon>
        <taxon>Legionellaceae</taxon>
        <taxon>Legionella</taxon>
    </lineage>
</organism>
<feature type="chain" id="PRO_1000077901" description="UvrABC system protein B">
    <location>
        <begin position="1"/>
        <end position="663"/>
    </location>
</feature>
<feature type="domain" description="Helicase ATP-binding" evidence="1">
    <location>
        <begin position="26"/>
        <end position="183"/>
    </location>
</feature>
<feature type="domain" description="Helicase C-terminal" evidence="1">
    <location>
        <begin position="430"/>
        <end position="596"/>
    </location>
</feature>
<feature type="domain" description="UVR" evidence="1">
    <location>
        <begin position="624"/>
        <end position="659"/>
    </location>
</feature>
<feature type="short sequence motif" description="Beta-hairpin">
    <location>
        <begin position="92"/>
        <end position="115"/>
    </location>
</feature>
<feature type="binding site" evidence="1">
    <location>
        <begin position="39"/>
        <end position="46"/>
    </location>
    <ligand>
        <name>ATP</name>
        <dbReference type="ChEBI" id="CHEBI:30616"/>
    </ligand>
</feature>
<comment type="function">
    <text evidence="1">The UvrABC repair system catalyzes the recognition and processing of DNA lesions. A damage recognition complex composed of 2 UvrA and 2 UvrB subunits scans DNA for abnormalities. Upon binding of the UvrA(2)B(2) complex to a putative damaged site, the DNA wraps around one UvrB monomer. DNA wrap is dependent on ATP binding by UvrB and probably causes local melting of the DNA helix, facilitating insertion of UvrB beta-hairpin between the DNA strands. Then UvrB probes one DNA strand for the presence of a lesion. If a lesion is found the UvrA subunits dissociate and the UvrB-DNA preincision complex is formed. This complex is subsequently bound by UvrC and the second UvrB is released. If no lesion is found, the DNA wraps around the other UvrB subunit that will check the other stand for damage.</text>
</comment>
<comment type="subunit">
    <text evidence="1">Forms a heterotetramer with UvrA during the search for lesions. Interacts with UvrC in an incision complex.</text>
</comment>
<comment type="subcellular location">
    <subcellularLocation>
        <location evidence="1">Cytoplasm</location>
    </subcellularLocation>
</comment>
<comment type="domain">
    <text evidence="1">The beta-hairpin motif is involved in DNA binding.</text>
</comment>
<comment type="similarity">
    <text evidence="1">Belongs to the UvrB family.</text>
</comment>
<dbReference type="EMBL" id="CP000675">
    <property type="protein sequence ID" value="ABQ54093.1"/>
    <property type="molecule type" value="Genomic_DNA"/>
</dbReference>
<dbReference type="RefSeq" id="WP_011945277.1">
    <property type="nucleotide sequence ID" value="NZ_JAPMSS010000003.1"/>
</dbReference>
<dbReference type="SMR" id="A5I9P3"/>
<dbReference type="KEGG" id="lpc:LPC_0094"/>
<dbReference type="HOGENOM" id="CLU_009621_2_1_6"/>
<dbReference type="GO" id="GO:0005737">
    <property type="term" value="C:cytoplasm"/>
    <property type="evidence" value="ECO:0007669"/>
    <property type="project" value="UniProtKB-SubCell"/>
</dbReference>
<dbReference type="GO" id="GO:0009380">
    <property type="term" value="C:excinuclease repair complex"/>
    <property type="evidence" value="ECO:0007669"/>
    <property type="project" value="InterPro"/>
</dbReference>
<dbReference type="GO" id="GO:0005524">
    <property type="term" value="F:ATP binding"/>
    <property type="evidence" value="ECO:0007669"/>
    <property type="project" value="UniProtKB-UniRule"/>
</dbReference>
<dbReference type="GO" id="GO:0016887">
    <property type="term" value="F:ATP hydrolysis activity"/>
    <property type="evidence" value="ECO:0007669"/>
    <property type="project" value="InterPro"/>
</dbReference>
<dbReference type="GO" id="GO:0003677">
    <property type="term" value="F:DNA binding"/>
    <property type="evidence" value="ECO:0007669"/>
    <property type="project" value="UniProtKB-UniRule"/>
</dbReference>
<dbReference type="GO" id="GO:0009381">
    <property type="term" value="F:excinuclease ABC activity"/>
    <property type="evidence" value="ECO:0007669"/>
    <property type="project" value="UniProtKB-UniRule"/>
</dbReference>
<dbReference type="GO" id="GO:0004386">
    <property type="term" value="F:helicase activity"/>
    <property type="evidence" value="ECO:0007669"/>
    <property type="project" value="UniProtKB-KW"/>
</dbReference>
<dbReference type="GO" id="GO:0006289">
    <property type="term" value="P:nucleotide-excision repair"/>
    <property type="evidence" value="ECO:0007669"/>
    <property type="project" value="UniProtKB-UniRule"/>
</dbReference>
<dbReference type="GO" id="GO:0009432">
    <property type="term" value="P:SOS response"/>
    <property type="evidence" value="ECO:0007669"/>
    <property type="project" value="UniProtKB-UniRule"/>
</dbReference>
<dbReference type="CDD" id="cd17916">
    <property type="entry name" value="DEXHc_UvrB"/>
    <property type="match status" value="1"/>
</dbReference>
<dbReference type="CDD" id="cd18790">
    <property type="entry name" value="SF2_C_UvrB"/>
    <property type="match status" value="1"/>
</dbReference>
<dbReference type="FunFam" id="3.40.50.300:FF:000477">
    <property type="entry name" value="UvrABC system protein B"/>
    <property type="match status" value="1"/>
</dbReference>
<dbReference type="Gene3D" id="3.40.50.300">
    <property type="entry name" value="P-loop containing nucleotide triphosphate hydrolases"/>
    <property type="match status" value="3"/>
</dbReference>
<dbReference type="Gene3D" id="4.10.860.10">
    <property type="entry name" value="UVR domain"/>
    <property type="match status" value="1"/>
</dbReference>
<dbReference type="HAMAP" id="MF_00204">
    <property type="entry name" value="UvrB"/>
    <property type="match status" value="1"/>
</dbReference>
<dbReference type="InterPro" id="IPR006935">
    <property type="entry name" value="Helicase/UvrB_N"/>
</dbReference>
<dbReference type="InterPro" id="IPR014001">
    <property type="entry name" value="Helicase_ATP-bd"/>
</dbReference>
<dbReference type="InterPro" id="IPR001650">
    <property type="entry name" value="Helicase_C-like"/>
</dbReference>
<dbReference type="InterPro" id="IPR027417">
    <property type="entry name" value="P-loop_NTPase"/>
</dbReference>
<dbReference type="InterPro" id="IPR001943">
    <property type="entry name" value="UVR_dom"/>
</dbReference>
<dbReference type="InterPro" id="IPR036876">
    <property type="entry name" value="UVR_dom_sf"/>
</dbReference>
<dbReference type="InterPro" id="IPR004807">
    <property type="entry name" value="UvrB"/>
</dbReference>
<dbReference type="InterPro" id="IPR041471">
    <property type="entry name" value="UvrB_inter"/>
</dbReference>
<dbReference type="InterPro" id="IPR024759">
    <property type="entry name" value="UvrB_YAD/RRR_dom"/>
</dbReference>
<dbReference type="NCBIfam" id="NF003673">
    <property type="entry name" value="PRK05298.1"/>
    <property type="match status" value="1"/>
</dbReference>
<dbReference type="NCBIfam" id="TIGR00631">
    <property type="entry name" value="uvrb"/>
    <property type="match status" value="1"/>
</dbReference>
<dbReference type="PANTHER" id="PTHR24029">
    <property type="entry name" value="UVRABC SYSTEM PROTEIN B"/>
    <property type="match status" value="1"/>
</dbReference>
<dbReference type="PANTHER" id="PTHR24029:SF0">
    <property type="entry name" value="UVRABC SYSTEM PROTEIN B"/>
    <property type="match status" value="1"/>
</dbReference>
<dbReference type="Pfam" id="PF00271">
    <property type="entry name" value="Helicase_C"/>
    <property type="match status" value="1"/>
</dbReference>
<dbReference type="Pfam" id="PF04851">
    <property type="entry name" value="ResIII"/>
    <property type="match status" value="1"/>
</dbReference>
<dbReference type="Pfam" id="PF02151">
    <property type="entry name" value="UVR"/>
    <property type="match status" value="1"/>
</dbReference>
<dbReference type="Pfam" id="PF12344">
    <property type="entry name" value="UvrB"/>
    <property type="match status" value="1"/>
</dbReference>
<dbReference type="Pfam" id="PF17757">
    <property type="entry name" value="UvrB_inter"/>
    <property type="match status" value="1"/>
</dbReference>
<dbReference type="SMART" id="SM00487">
    <property type="entry name" value="DEXDc"/>
    <property type="match status" value="1"/>
</dbReference>
<dbReference type="SMART" id="SM00490">
    <property type="entry name" value="HELICc"/>
    <property type="match status" value="1"/>
</dbReference>
<dbReference type="SUPFAM" id="SSF46600">
    <property type="entry name" value="C-terminal UvrC-binding domain of UvrB"/>
    <property type="match status" value="1"/>
</dbReference>
<dbReference type="SUPFAM" id="SSF52540">
    <property type="entry name" value="P-loop containing nucleoside triphosphate hydrolases"/>
    <property type="match status" value="2"/>
</dbReference>
<dbReference type="PROSITE" id="PS51192">
    <property type="entry name" value="HELICASE_ATP_BIND_1"/>
    <property type="match status" value="2"/>
</dbReference>
<dbReference type="PROSITE" id="PS51194">
    <property type="entry name" value="HELICASE_CTER"/>
    <property type="match status" value="1"/>
</dbReference>
<dbReference type="PROSITE" id="PS50151">
    <property type="entry name" value="UVR"/>
    <property type="match status" value="1"/>
</dbReference>
<name>UVRB_LEGPC</name>
<reference key="1">
    <citation type="submission" date="2006-11" db="EMBL/GenBank/DDBJ databases">
        <title>Identification and characterization of a new conjugation/ type IVA secretion system (trb/tra) of L. pneumophila Corby localized on a mobile genomic island.</title>
        <authorList>
            <person name="Gloeckner G."/>
            <person name="Albert-Weissenberger C."/>
            <person name="Weinmann E."/>
            <person name="Jacobi S."/>
            <person name="Schunder E."/>
            <person name="Steinert M."/>
            <person name="Buchrieser C."/>
            <person name="Hacker J."/>
            <person name="Heuner K."/>
        </authorList>
    </citation>
    <scope>NUCLEOTIDE SEQUENCE [LARGE SCALE GENOMIC DNA]</scope>
    <source>
        <strain>Corby</strain>
    </source>
</reference>
<accession>A5I9P3</accession>
<keyword id="KW-0067">ATP-binding</keyword>
<keyword id="KW-0963">Cytoplasm</keyword>
<keyword id="KW-0227">DNA damage</keyword>
<keyword id="KW-0228">DNA excision</keyword>
<keyword id="KW-0234">DNA repair</keyword>
<keyword id="KW-0267">Excision nuclease</keyword>
<keyword id="KW-0347">Helicase</keyword>
<keyword id="KW-0378">Hydrolase</keyword>
<keyword id="KW-0547">Nucleotide-binding</keyword>
<keyword id="KW-0742">SOS response</keyword>
<sequence length="663" mass="75637">MKDLFKIYSNYQPAGDQPTAIASLIDGLESGLAKQTLLGVTGSGKTFTIAHVIQAMKRPTLIMAPNKTLAAQLYGEFKAFFPDNAVEYFVSYYDYYQPEAYVPASDTFIEKDASINEHIEQMRLSATKALIERKDAIIVATVSAIYGLGDPDSYLRMLLHLSRGEQSDQRKILKRLAEMQYTRTNLSLERGQFRVHGDVIDIFPADSEKEAIRIELFDDEVDNIARFDPLTGEILQRLPRVTIFPKTHYVTPRERILETVEKVKAELQERLAELNAQNKLVEAQRLEQRTCFDIEMMLELGYCSGIENYSRYLSNREAGEAPPTLFDYLPPDALLIIDESHVTVPQIGGMYRGDRARKETLVNYGFRLPSALDNRPLRFEEFEERSPQTIYISATPGPYEQEHSDNVAEQVVRPTGLIDPEVEIRPVKTQVDDLMSEIRQVIAQGSRILVTTLTKRMAEDLTEYLSEHGIKVRYLHSDVDTVERMEIIRDLRLGEFDVLVGINLLREGLDMPEVALVAILDADKEGFLRSERSLIQTIGRAARNVKGRAILYADTMTGSMQRALMETERRREKQKAFNLKHGITPKGINKSVEDILEGAYIGKRKTMVAEQAPRYTHWSPQELAKQINALEKQMYAHAQNMEFELAAKIRDEYLLLKEQLMKI</sequence>
<proteinExistence type="inferred from homology"/>
<gene>
    <name evidence="1" type="primary">uvrB</name>
    <name type="ordered locus">LPC_0094</name>
</gene>
<evidence type="ECO:0000255" key="1">
    <source>
        <dbReference type="HAMAP-Rule" id="MF_00204"/>
    </source>
</evidence>
<protein>
    <recommendedName>
        <fullName evidence="1">UvrABC system protein B</fullName>
        <shortName evidence="1">Protein UvrB</shortName>
    </recommendedName>
    <alternativeName>
        <fullName evidence="1">Excinuclease ABC subunit B</fullName>
    </alternativeName>
</protein>